<organism>
    <name type="scientific">Cyrtotria poduriformis</name>
    <name type="common">Cockroach</name>
    <dbReference type="NCBI Taxonomy" id="344688"/>
    <lineage>
        <taxon>Eukaryota</taxon>
        <taxon>Metazoa</taxon>
        <taxon>Ecdysozoa</taxon>
        <taxon>Arthropoda</taxon>
        <taxon>Hexapoda</taxon>
        <taxon>Insecta</taxon>
        <taxon>Pterygota</taxon>
        <taxon>Neoptera</taxon>
        <taxon>Polyneoptera</taxon>
        <taxon>Dictyoptera</taxon>
        <taxon>Blattodea</taxon>
        <taxon>Blaberoidea</taxon>
        <taxon>Blaberidae</taxon>
        <taxon>Perisphaerinae</taxon>
        <taxon>Cyrtotria</taxon>
    </lineage>
</organism>
<evidence type="ECO:0000255" key="1"/>
<evidence type="ECO:0000269" key="2">
    <source>
    </source>
</evidence>
<evidence type="ECO:0000303" key="3">
    <source>
    </source>
</evidence>
<evidence type="ECO:0000305" key="4"/>
<reference evidence="4" key="1">
    <citation type="journal article" date="2009" name="BMC Evol. Biol.">
        <title>A proteomic approach for studying insect phylogeny: CAPA peptides of ancient insect taxa (Dictyoptera, Blattoptera) as a test case.</title>
        <authorList>
            <person name="Roth S."/>
            <person name="Fromm B."/>
            <person name="Gaede G."/>
            <person name="Predel R."/>
        </authorList>
    </citation>
    <scope>PROTEIN SEQUENCE</scope>
    <scope>AMIDATION AT VAL-11</scope>
    <source>
        <tissue evidence="2">Abdominal perisympathetic organs</tissue>
    </source>
</reference>
<proteinExistence type="evidence at protein level"/>
<feature type="peptide" id="PRO_0000378780" description="Periviscerokinin-2" evidence="2">
    <location>
        <begin position="1"/>
        <end position="11"/>
    </location>
</feature>
<feature type="modified residue" description="Valine amide" evidence="2">
    <location>
        <position position="11"/>
    </location>
</feature>
<accession>P85577</accession>
<comment type="function">
    <text evidence="4">Mediates visceral muscle contractile activity (myotropic activity).</text>
</comment>
<comment type="subcellular location">
    <subcellularLocation>
        <location evidence="4">Secreted</location>
    </subcellularLocation>
</comment>
<comment type="similarity">
    <text evidence="1">Belongs to the periviscerokinin family.</text>
</comment>
<keyword id="KW-0027">Amidation</keyword>
<keyword id="KW-0903">Direct protein sequencing</keyword>
<keyword id="KW-0527">Neuropeptide</keyword>
<keyword id="KW-0964">Secreted</keyword>
<name>PVK2_CYRPO</name>
<protein>
    <recommendedName>
        <fullName evidence="3">Periviscerokinin-2</fullName>
        <shortName evidence="3">CyrPo-PVK-2</shortName>
    </recommendedName>
</protein>
<sequence length="11" mass="1103">GSSGLISMPRV</sequence>
<dbReference type="GO" id="GO:0005576">
    <property type="term" value="C:extracellular region"/>
    <property type="evidence" value="ECO:0007669"/>
    <property type="project" value="UniProtKB-SubCell"/>
</dbReference>
<dbReference type="GO" id="GO:0007218">
    <property type="term" value="P:neuropeptide signaling pathway"/>
    <property type="evidence" value="ECO:0007669"/>
    <property type="project" value="UniProtKB-KW"/>
</dbReference>
<dbReference type="InterPro" id="IPR013231">
    <property type="entry name" value="Periviscerokinin"/>
</dbReference>
<dbReference type="Pfam" id="PF08259">
    <property type="entry name" value="Periviscerokin"/>
    <property type="match status" value="1"/>
</dbReference>